<sequence>MTDLTNQKDAALAAIAAATSLDALEEQRVAALGKKGWVSLALKTLGGMDPEERQKAAPAIQAVRAEVADAIAARKDALEREALEAQLATETLDLTLPAPQQRFGSVHPVSQVMDELAEIFADLGFAVATGPEIEDDWHNFTALNMAETHPARAMHDTFYFPDVDSEGRRMLLRTHTSPVQIRAMKAQGAPIRIIAPGRVYRSDSDATHTPMFHQVEGLVIDRDIHLGHLKWTLETFLKAFFEREDIVLRLRPSYFPFTEPSVEVDVGYSREGGRRVVGGDGNAEGHDWMELLGSGMVNRRVIEMAGLDPDEWQGFAWGLGVDRLAMLKYGMDDLRAFFDGDQRWLDHYGFSPFDQPTLSAGVGARS</sequence>
<organism>
    <name type="scientific">Erythrobacter litoralis (strain HTCC2594)</name>
    <dbReference type="NCBI Taxonomy" id="314225"/>
    <lineage>
        <taxon>Bacteria</taxon>
        <taxon>Pseudomonadati</taxon>
        <taxon>Pseudomonadota</taxon>
        <taxon>Alphaproteobacteria</taxon>
        <taxon>Sphingomonadales</taxon>
        <taxon>Erythrobacteraceae</taxon>
        <taxon>Erythrobacter/Porphyrobacter group</taxon>
        <taxon>Erythrobacter</taxon>
    </lineage>
</organism>
<evidence type="ECO:0000255" key="1">
    <source>
        <dbReference type="HAMAP-Rule" id="MF_00281"/>
    </source>
</evidence>
<feature type="chain" id="PRO_1000006828" description="Phenylalanine--tRNA ligase alpha subunit">
    <location>
        <begin position="1"/>
        <end position="366"/>
    </location>
</feature>
<feature type="binding site" evidence="1">
    <location>
        <position position="259"/>
    </location>
    <ligand>
        <name>Mg(2+)</name>
        <dbReference type="ChEBI" id="CHEBI:18420"/>
        <note>shared with beta subunit</note>
    </ligand>
</feature>
<proteinExistence type="inferred from homology"/>
<dbReference type="EC" id="6.1.1.20" evidence="1"/>
<dbReference type="EMBL" id="CP000157">
    <property type="protein sequence ID" value="ABC64860.1"/>
    <property type="molecule type" value="Genomic_DNA"/>
</dbReference>
<dbReference type="RefSeq" id="WP_011415682.1">
    <property type="nucleotide sequence ID" value="NC_007722.1"/>
</dbReference>
<dbReference type="SMR" id="Q2N631"/>
<dbReference type="STRING" id="314225.ELI_13840"/>
<dbReference type="KEGG" id="eli:ELI_13840"/>
<dbReference type="eggNOG" id="COG0016">
    <property type="taxonomic scope" value="Bacteria"/>
</dbReference>
<dbReference type="HOGENOM" id="CLU_025086_0_1_5"/>
<dbReference type="OrthoDB" id="9800719at2"/>
<dbReference type="Proteomes" id="UP000008808">
    <property type="component" value="Chromosome"/>
</dbReference>
<dbReference type="GO" id="GO:0005737">
    <property type="term" value="C:cytoplasm"/>
    <property type="evidence" value="ECO:0007669"/>
    <property type="project" value="UniProtKB-SubCell"/>
</dbReference>
<dbReference type="GO" id="GO:0005524">
    <property type="term" value="F:ATP binding"/>
    <property type="evidence" value="ECO:0007669"/>
    <property type="project" value="UniProtKB-UniRule"/>
</dbReference>
<dbReference type="GO" id="GO:0000287">
    <property type="term" value="F:magnesium ion binding"/>
    <property type="evidence" value="ECO:0007669"/>
    <property type="project" value="UniProtKB-UniRule"/>
</dbReference>
<dbReference type="GO" id="GO:0004826">
    <property type="term" value="F:phenylalanine-tRNA ligase activity"/>
    <property type="evidence" value="ECO:0007669"/>
    <property type="project" value="UniProtKB-UniRule"/>
</dbReference>
<dbReference type="GO" id="GO:0000049">
    <property type="term" value="F:tRNA binding"/>
    <property type="evidence" value="ECO:0007669"/>
    <property type="project" value="InterPro"/>
</dbReference>
<dbReference type="GO" id="GO:0006432">
    <property type="term" value="P:phenylalanyl-tRNA aminoacylation"/>
    <property type="evidence" value="ECO:0007669"/>
    <property type="project" value="UniProtKB-UniRule"/>
</dbReference>
<dbReference type="CDD" id="cd00496">
    <property type="entry name" value="PheRS_alpha_core"/>
    <property type="match status" value="1"/>
</dbReference>
<dbReference type="FunFam" id="3.30.930.10:FF:000003">
    <property type="entry name" value="Phenylalanine--tRNA ligase alpha subunit"/>
    <property type="match status" value="1"/>
</dbReference>
<dbReference type="Gene3D" id="3.30.930.10">
    <property type="entry name" value="Bira Bifunctional Protein, Domain 2"/>
    <property type="match status" value="1"/>
</dbReference>
<dbReference type="HAMAP" id="MF_00281">
    <property type="entry name" value="Phe_tRNA_synth_alpha1"/>
    <property type="match status" value="1"/>
</dbReference>
<dbReference type="InterPro" id="IPR006195">
    <property type="entry name" value="aa-tRNA-synth_II"/>
</dbReference>
<dbReference type="InterPro" id="IPR045864">
    <property type="entry name" value="aa-tRNA-synth_II/BPL/LPL"/>
</dbReference>
<dbReference type="InterPro" id="IPR004529">
    <property type="entry name" value="Phe-tRNA-synth_IIc_asu"/>
</dbReference>
<dbReference type="InterPro" id="IPR004188">
    <property type="entry name" value="Phe-tRNA_ligase_II_N"/>
</dbReference>
<dbReference type="InterPro" id="IPR022911">
    <property type="entry name" value="Phe_tRNA_ligase_alpha1_bac"/>
</dbReference>
<dbReference type="InterPro" id="IPR002319">
    <property type="entry name" value="Phenylalanyl-tRNA_Synthase"/>
</dbReference>
<dbReference type="InterPro" id="IPR010978">
    <property type="entry name" value="tRNA-bd_arm"/>
</dbReference>
<dbReference type="NCBIfam" id="TIGR00468">
    <property type="entry name" value="pheS"/>
    <property type="match status" value="1"/>
</dbReference>
<dbReference type="PANTHER" id="PTHR11538:SF41">
    <property type="entry name" value="PHENYLALANINE--TRNA LIGASE, MITOCHONDRIAL"/>
    <property type="match status" value="1"/>
</dbReference>
<dbReference type="PANTHER" id="PTHR11538">
    <property type="entry name" value="PHENYLALANYL-TRNA SYNTHETASE"/>
    <property type="match status" value="1"/>
</dbReference>
<dbReference type="Pfam" id="PF02912">
    <property type="entry name" value="Phe_tRNA-synt_N"/>
    <property type="match status" value="1"/>
</dbReference>
<dbReference type="Pfam" id="PF01409">
    <property type="entry name" value="tRNA-synt_2d"/>
    <property type="match status" value="1"/>
</dbReference>
<dbReference type="SUPFAM" id="SSF55681">
    <property type="entry name" value="Class II aaRS and biotin synthetases"/>
    <property type="match status" value="1"/>
</dbReference>
<dbReference type="SUPFAM" id="SSF46589">
    <property type="entry name" value="tRNA-binding arm"/>
    <property type="match status" value="1"/>
</dbReference>
<dbReference type="PROSITE" id="PS50862">
    <property type="entry name" value="AA_TRNA_LIGASE_II"/>
    <property type="match status" value="1"/>
</dbReference>
<gene>
    <name evidence="1" type="primary">pheS</name>
    <name type="ordered locus">ELI_13840</name>
</gene>
<name>SYFA_ERYLH</name>
<keyword id="KW-0030">Aminoacyl-tRNA synthetase</keyword>
<keyword id="KW-0067">ATP-binding</keyword>
<keyword id="KW-0963">Cytoplasm</keyword>
<keyword id="KW-0436">Ligase</keyword>
<keyword id="KW-0460">Magnesium</keyword>
<keyword id="KW-0479">Metal-binding</keyword>
<keyword id="KW-0547">Nucleotide-binding</keyword>
<keyword id="KW-0648">Protein biosynthesis</keyword>
<keyword id="KW-1185">Reference proteome</keyword>
<reference key="1">
    <citation type="journal article" date="2009" name="J. Bacteriol.">
        <title>Complete genome sequence of Erythrobacter litoralis HTCC2594.</title>
        <authorList>
            <person name="Oh H.M."/>
            <person name="Giovannoni S.J."/>
            <person name="Ferriera S."/>
            <person name="Johnson J."/>
            <person name="Cho J.C."/>
        </authorList>
    </citation>
    <scope>NUCLEOTIDE SEQUENCE [LARGE SCALE GENOMIC DNA]</scope>
    <source>
        <strain>HTCC2594</strain>
    </source>
</reference>
<accession>Q2N631</accession>
<comment type="catalytic activity">
    <reaction evidence="1">
        <text>tRNA(Phe) + L-phenylalanine + ATP = L-phenylalanyl-tRNA(Phe) + AMP + diphosphate + H(+)</text>
        <dbReference type="Rhea" id="RHEA:19413"/>
        <dbReference type="Rhea" id="RHEA-COMP:9668"/>
        <dbReference type="Rhea" id="RHEA-COMP:9699"/>
        <dbReference type="ChEBI" id="CHEBI:15378"/>
        <dbReference type="ChEBI" id="CHEBI:30616"/>
        <dbReference type="ChEBI" id="CHEBI:33019"/>
        <dbReference type="ChEBI" id="CHEBI:58095"/>
        <dbReference type="ChEBI" id="CHEBI:78442"/>
        <dbReference type="ChEBI" id="CHEBI:78531"/>
        <dbReference type="ChEBI" id="CHEBI:456215"/>
        <dbReference type="EC" id="6.1.1.20"/>
    </reaction>
</comment>
<comment type="cofactor">
    <cofactor evidence="1">
        <name>Mg(2+)</name>
        <dbReference type="ChEBI" id="CHEBI:18420"/>
    </cofactor>
    <text evidence="1">Binds 2 magnesium ions per tetramer.</text>
</comment>
<comment type="subunit">
    <text evidence="1">Tetramer of two alpha and two beta subunits.</text>
</comment>
<comment type="subcellular location">
    <subcellularLocation>
        <location evidence="1">Cytoplasm</location>
    </subcellularLocation>
</comment>
<comment type="similarity">
    <text evidence="1">Belongs to the class-II aminoacyl-tRNA synthetase family. Phe-tRNA synthetase alpha subunit type 1 subfamily.</text>
</comment>
<protein>
    <recommendedName>
        <fullName evidence="1">Phenylalanine--tRNA ligase alpha subunit</fullName>
        <ecNumber evidence="1">6.1.1.20</ecNumber>
    </recommendedName>
    <alternativeName>
        <fullName evidence="1">Phenylalanyl-tRNA synthetase alpha subunit</fullName>
        <shortName evidence="1">PheRS</shortName>
    </alternativeName>
</protein>